<name>CRMD_ASPFU</name>
<feature type="chain" id="PRO_0000445301" description="Putative copper transporter crmD">
    <location>
        <begin position="1"/>
        <end position="218"/>
    </location>
</feature>
<feature type="transmembrane region" description="Helical" evidence="1">
    <location>
        <begin position="37"/>
        <end position="57"/>
    </location>
</feature>
<feature type="transmembrane region" description="Helical" evidence="1">
    <location>
        <begin position="176"/>
        <end position="196"/>
    </location>
</feature>
<organism>
    <name type="scientific">Aspergillus fumigatus (strain ATCC MYA-4609 / CBS 101355 / FGSC A1100 / Af293)</name>
    <name type="common">Neosartorya fumigata</name>
    <dbReference type="NCBI Taxonomy" id="330879"/>
    <lineage>
        <taxon>Eukaryota</taxon>
        <taxon>Fungi</taxon>
        <taxon>Dikarya</taxon>
        <taxon>Ascomycota</taxon>
        <taxon>Pezizomycotina</taxon>
        <taxon>Eurotiomycetes</taxon>
        <taxon>Eurotiomycetidae</taxon>
        <taxon>Eurotiales</taxon>
        <taxon>Aspergillaceae</taxon>
        <taxon>Aspergillus</taxon>
        <taxon>Aspergillus subgen. Fumigati</taxon>
    </lineage>
</organism>
<protein>
    <recommendedName>
        <fullName evidence="6">Putative copper transporter crmD</fullName>
    </recommendedName>
    <alternativeName>
        <fullName evidence="6">Copper-responsive metabolite biosynthesis cluster protein D</fullName>
    </alternativeName>
</protein>
<comment type="function">
    <text evidence="2 3 4">Putative copper transporter; part of the crm gene cluster that mediates the biosynthesis of a yet unidentified copper-responsive metabolite (PubMed:29844112). Probably involved in the transport of copper, even if it does not act as a major copper transporter (PubMed:25281782). In contrast to crmA, is not involved in the biosynthesis of fumivalines or fumicicolins (PubMed:35973982).</text>
</comment>
<comment type="catalytic activity">
    <reaction evidence="8">
        <text>Cu(2+)(in) = Cu(2+)(out)</text>
        <dbReference type="Rhea" id="RHEA:28703"/>
        <dbReference type="ChEBI" id="CHEBI:29036"/>
    </reaction>
</comment>
<comment type="subcellular location">
    <subcellularLocation>
        <location evidence="1">Membrane</location>
        <topology evidence="1">Multi-pass membrane protein</topology>
    </subcellularLocation>
</comment>
<comment type="induction">
    <text evidence="3">Expressed in copper depleted conditions via the regulation of the macA transcription factor.</text>
</comment>
<comment type="disruption phenotype">
    <text evidence="3 4">Does not affect the xanthocillin production, nor of fumivalines and fumicicolins.</text>
</comment>
<comment type="similarity">
    <text evidence="7">Belongs to the copper transporter (Ctr) (TC 1.A.56) family. SLC31A subfamily.</text>
</comment>
<reference key="1">
    <citation type="journal article" date="2005" name="Nature">
        <title>Genomic sequence of the pathogenic and allergenic filamentous fungus Aspergillus fumigatus.</title>
        <authorList>
            <person name="Nierman W.C."/>
            <person name="Pain A."/>
            <person name="Anderson M.J."/>
            <person name="Wortman J.R."/>
            <person name="Kim H.S."/>
            <person name="Arroyo J."/>
            <person name="Berriman M."/>
            <person name="Abe K."/>
            <person name="Archer D.B."/>
            <person name="Bermejo C."/>
            <person name="Bennett J.W."/>
            <person name="Bowyer P."/>
            <person name="Chen D."/>
            <person name="Collins M."/>
            <person name="Coulsen R."/>
            <person name="Davies R."/>
            <person name="Dyer P.S."/>
            <person name="Farman M.L."/>
            <person name="Fedorova N."/>
            <person name="Fedorova N.D."/>
            <person name="Feldblyum T.V."/>
            <person name="Fischer R."/>
            <person name="Fosker N."/>
            <person name="Fraser A."/>
            <person name="Garcia J.L."/>
            <person name="Garcia M.J."/>
            <person name="Goble A."/>
            <person name="Goldman G.H."/>
            <person name="Gomi K."/>
            <person name="Griffith-Jones S."/>
            <person name="Gwilliam R."/>
            <person name="Haas B.J."/>
            <person name="Haas H."/>
            <person name="Harris D.E."/>
            <person name="Horiuchi H."/>
            <person name="Huang J."/>
            <person name="Humphray S."/>
            <person name="Jimenez J."/>
            <person name="Keller N."/>
            <person name="Khouri H."/>
            <person name="Kitamoto K."/>
            <person name="Kobayashi T."/>
            <person name="Konzack S."/>
            <person name="Kulkarni R."/>
            <person name="Kumagai T."/>
            <person name="Lafton A."/>
            <person name="Latge J.-P."/>
            <person name="Li W."/>
            <person name="Lord A."/>
            <person name="Lu C."/>
            <person name="Majoros W.H."/>
            <person name="May G.S."/>
            <person name="Miller B.L."/>
            <person name="Mohamoud Y."/>
            <person name="Molina M."/>
            <person name="Monod M."/>
            <person name="Mouyna I."/>
            <person name="Mulligan S."/>
            <person name="Murphy L.D."/>
            <person name="O'Neil S."/>
            <person name="Paulsen I."/>
            <person name="Penalva M.A."/>
            <person name="Pertea M."/>
            <person name="Price C."/>
            <person name="Pritchard B.L."/>
            <person name="Quail M.A."/>
            <person name="Rabbinowitsch E."/>
            <person name="Rawlins N."/>
            <person name="Rajandream M.A."/>
            <person name="Reichard U."/>
            <person name="Renauld H."/>
            <person name="Robson G.D."/>
            <person name="Rodriguez de Cordoba S."/>
            <person name="Rodriguez-Pena J.M."/>
            <person name="Ronning C.M."/>
            <person name="Rutter S."/>
            <person name="Salzberg S.L."/>
            <person name="Sanchez M."/>
            <person name="Sanchez-Ferrero J.C."/>
            <person name="Saunders D."/>
            <person name="Seeger K."/>
            <person name="Squares R."/>
            <person name="Squares S."/>
            <person name="Takeuchi M."/>
            <person name="Tekaia F."/>
            <person name="Turner G."/>
            <person name="Vazquez de Aldana C.R."/>
            <person name="Weidman J."/>
            <person name="White O."/>
            <person name="Woodward J.R."/>
            <person name="Yu J.-H."/>
            <person name="Fraser C.M."/>
            <person name="Galagan J.E."/>
            <person name="Asai K."/>
            <person name="Machida M."/>
            <person name="Hall N."/>
            <person name="Barrell B.G."/>
            <person name="Denning D.W."/>
        </authorList>
    </citation>
    <scope>NUCLEOTIDE SEQUENCE [LARGE SCALE GENOMIC DNA]</scope>
    <source>
        <strain>ATCC MYA-4609 / CBS 101355 / FGSC A1100 / Af293</strain>
    </source>
</reference>
<reference key="2">
    <citation type="journal article" date="2014" name="Fungal Genet. Biol.">
        <title>Identification of high-affinity copper transporters in Aspergillus fumigatus.</title>
        <authorList>
            <person name="Park Y.S."/>
            <person name="Lian H."/>
            <person name="Chang M."/>
            <person name="Kang C.M."/>
            <person name="Yun C.W."/>
        </authorList>
    </citation>
    <scope>IDENTIFICATION</scope>
    <scope>FUNCTION</scope>
</reference>
<reference key="3">
    <citation type="journal article" date="2018" name="MBio">
        <title>Fungal isocyanide synthases and xanthocillin biosynthesis in Aspergillus fumigatus.</title>
        <authorList>
            <person name="Lim F.Y."/>
            <person name="Won T.H."/>
            <person name="Raffa N."/>
            <person name="Baccile J.A."/>
            <person name="Wisecaver J."/>
            <person name="Rokas A."/>
            <person name="Schroeder F.C."/>
            <person name="Keller N.P."/>
        </authorList>
    </citation>
    <scope>FUNCTION</scope>
    <scope>INDUCTION</scope>
    <scope>DISRUPTION PHENOTYPE</scope>
</reference>
<reference key="4">
    <citation type="journal article" date="2022" name="Nat. Commun.">
        <title>Copper starvation induces antimicrobial isocyanide integrated into two distinct biosynthetic pathways in fungi.</title>
        <authorList>
            <person name="Won T.H."/>
            <person name="Bok J.W."/>
            <person name="Nadig N."/>
            <person name="Venkatesh N."/>
            <person name="Nickles G."/>
            <person name="Greco C."/>
            <person name="Lim F.Y."/>
            <person name="Gonzalez J.B."/>
            <person name="Turgeon B.G."/>
            <person name="Keller N.P."/>
            <person name="Schroeder F.C."/>
        </authorList>
    </citation>
    <scope>FUNCTION</scope>
    <scope>DISRUPTION PHENOTYPE</scope>
</reference>
<keyword id="KW-0186">Copper</keyword>
<keyword id="KW-0187">Copper transport</keyword>
<keyword id="KW-0406">Ion transport</keyword>
<keyword id="KW-0472">Membrane</keyword>
<keyword id="KW-1185">Reference proteome</keyword>
<keyword id="KW-0812">Transmembrane</keyword>
<keyword id="KW-1133">Transmembrane helix</keyword>
<keyword id="KW-0813">Transport</keyword>
<proteinExistence type="evidence at transcript level"/>
<dbReference type="EMBL" id="AAHF01000002">
    <property type="protein sequence ID" value="EAL92220.1"/>
    <property type="molecule type" value="Genomic_DNA"/>
</dbReference>
<dbReference type="RefSeq" id="XP_754258.1">
    <property type="nucleotide sequence ID" value="XM_749165.1"/>
</dbReference>
<dbReference type="STRING" id="330879.Q4WYN3"/>
<dbReference type="EnsemblFungi" id="EAL92220">
    <property type="protein sequence ID" value="EAL92220"/>
    <property type="gene ID" value="AFUA_3G13660"/>
</dbReference>
<dbReference type="GeneID" id="3512311"/>
<dbReference type="KEGG" id="afm:AFUA_3G13660"/>
<dbReference type="VEuPathDB" id="FungiDB:Afu3g13660"/>
<dbReference type="eggNOG" id="ENOG502SQNR">
    <property type="taxonomic scope" value="Eukaryota"/>
</dbReference>
<dbReference type="HOGENOM" id="CLU_081053_0_0_1"/>
<dbReference type="InParanoid" id="Q4WYN3"/>
<dbReference type="OMA" id="MNMPAVF"/>
<dbReference type="OrthoDB" id="73901at2759"/>
<dbReference type="Proteomes" id="UP000002530">
    <property type="component" value="Chromosome 3"/>
</dbReference>
<dbReference type="GO" id="GO:0005886">
    <property type="term" value="C:plasma membrane"/>
    <property type="evidence" value="ECO:0000318"/>
    <property type="project" value="GO_Central"/>
</dbReference>
<dbReference type="GO" id="GO:0005375">
    <property type="term" value="F:copper ion transmembrane transporter activity"/>
    <property type="evidence" value="ECO:0000318"/>
    <property type="project" value="GO_Central"/>
</dbReference>
<dbReference type="InterPro" id="IPR007274">
    <property type="entry name" value="Cop_transporter"/>
</dbReference>
<dbReference type="PANTHER" id="PTHR12483:SF27">
    <property type="entry name" value="COPPER TRANSPORT PROTEIN CTR1"/>
    <property type="match status" value="1"/>
</dbReference>
<dbReference type="PANTHER" id="PTHR12483">
    <property type="entry name" value="SOLUTE CARRIER FAMILY 31 COPPER TRANSPORTERS"/>
    <property type="match status" value="1"/>
</dbReference>
<dbReference type="Pfam" id="PF04145">
    <property type="entry name" value="Ctr"/>
    <property type="match status" value="1"/>
</dbReference>
<sequence length="218" mass="24728">MHHNDHSNGMPMSMVFDTSTEITLFFQGWTTTTAASYSLTLLFLFALAVFNRFLGVLKFQLDVKHTQPTEGRVPKLQQPRARRRHAIPKARLSPQPRYMQVAETDTEDEAPFSSAQFLESDAEHTRHEFPSDLIQEPQGPLGTRRWWNVYRRWSWRRDGTGSLLEGLRALVGYALMLAVMTFNVGVLCAVVGGIVVGELLLGRYAQPSLGWQDDACHH</sequence>
<accession>Q4WYN3</accession>
<evidence type="ECO:0000255" key="1"/>
<evidence type="ECO:0000269" key="2">
    <source>
    </source>
</evidence>
<evidence type="ECO:0000269" key="3">
    <source>
    </source>
</evidence>
<evidence type="ECO:0000269" key="4">
    <source>
    </source>
</evidence>
<evidence type="ECO:0000303" key="5">
    <source>
    </source>
</evidence>
<evidence type="ECO:0000303" key="6">
    <source>
    </source>
</evidence>
<evidence type="ECO:0000305" key="7"/>
<evidence type="ECO:0000305" key="8">
    <source>
    </source>
</evidence>
<gene>
    <name evidence="6" type="primary">crmD</name>
    <name evidence="5" type="synonym">ctrA1</name>
    <name type="ORF">AFUA_3G13660</name>
</gene>